<comment type="function">
    <text evidence="1">ATP-dependent specificity component of the Clp protease. It directs the protease to specific substrates. Can perform chaperone functions in the absence of ClpP.</text>
</comment>
<comment type="subunit">
    <text evidence="1">Component of the ClpX-ClpP complex. Forms a hexameric ring that, in the presence of ATP, binds to fourteen ClpP subunits assembled into a disk-like structure with a central cavity, resembling the structure of eukaryotic proteasomes.</text>
</comment>
<comment type="similarity">
    <text evidence="1">Belongs to the ClpX chaperone family.</text>
</comment>
<name>CLPX_PSEPF</name>
<sequence length="427" mass="46913">MTDTRNGEDNGKLLYCSFCGKSQHEVRKLIAGPSVFICDECVDLCNDIIREEVQEAQAESSAHKLPSPKEISGILDQYVIGQERAKKVLAVAVYNHYKRLNQRDKKADDVELGKSNILLIGPTGSGKTLLAETLARLLNVPFTIADATTLTEAGYVGEDVENIIQKLLQKCDYDVEKAQMGIVYIDEIDKISRKSDNPSITRDVSGEGVQQALLKLIEGTVASVPPQGGRKHPQQEFLQVDTRNILFICGGAFSGLEKVIQNRSTKGGIGFNAEVRSKEEGKKVGESLREVEPDDLVKFGLIPEFVGRLPVLATLDELDEAALMQILTEPKNALTKQYAKLFEMEGVDLEFRSDALKSVAKRALERKTGARGLRSILEGVLLDTMYEIPSQSEVSKVVIDESVIEGKSKPLYIYENSEPAAKAAPDA</sequence>
<evidence type="ECO:0000255" key="1">
    <source>
        <dbReference type="HAMAP-Rule" id="MF_00175"/>
    </source>
</evidence>
<evidence type="ECO:0000255" key="2">
    <source>
        <dbReference type="PROSITE-ProRule" id="PRU01250"/>
    </source>
</evidence>
<organism>
    <name type="scientific">Pseudomonas fluorescens (strain Pf0-1)</name>
    <dbReference type="NCBI Taxonomy" id="205922"/>
    <lineage>
        <taxon>Bacteria</taxon>
        <taxon>Pseudomonadati</taxon>
        <taxon>Pseudomonadota</taxon>
        <taxon>Gammaproteobacteria</taxon>
        <taxon>Pseudomonadales</taxon>
        <taxon>Pseudomonadaceae</taxon>
        <taxon>Pseudomonas</taxon>
    </lineage>
</organism>
<accession>Q3K9X0</accession>
<dbReference type="EMBL" id="CP000094">
    <property type="protein sequence ID" value="ABA75434.1"/>
    <property type="molecule type" value="Genomic_DNA"/>
</dbReference>
<dbReference type="RefSeq" id="WP_007951558.1">
    <property type="nucleotide sequence ID" value="NC_007492.2"/>
</dbReference>
<dbReference type="SMR" id="Q3K9X0"/>
<dbReference type="KEGG" id="pfo:Pfl01_3696"/>
<dbReference type="eggNOG" id="COG1219">
    <property type="taxonomic scope" value="Bacteria"/>
</dbReference>
<dbReference type="HOGENOM" id="CLU_014218_8_2_6"/>
<dbReference type="Proteomes" id="UP000002704">
    <property type="component" value="Chromosome"/>
</dbReference>
<dbReference type="GO" id="GO:0009376">
    <property type="term" value="C:HslUV protease complex"/>
    <property type="evidence" value="ECO:0007669"/>
    <property type="project" value="TreeGrafter"/>
</dbReference>
<dbReference type="GO" id="GO:0005524">
    <property type="term" value="F:ATP binding"/>
    <property type="evidence" value="ECO:0007669"/>
    <property type="project" value="UniProtKB-UniRule"/>
</dbReference>
<dbReference type="GO" id="GO:0016887">
    <property type="term" value="F:ATP hydrolysis activity"/>
    <property type="evidence" value="ECO:0007669"/>
    <property type="project" value="InterPro"/>
</dbReference>
<dbReference type="GO" id="GO:0140662">
    <property type="term" value="F:ATP-dependent protein folding chaperone"/>
    <property type="evidence" value="ECO:0007669"/>
    <property type="project" value="InterPro"/>
</dbReference>
<dbReference type="GO" id="GO:0046983">
    <property type="term" value="F:protein dimerization activity"/>
    <property type="evidence" value="ECO:0007669"/>
    <property type="project" value="InterPro"/>
</dbReference>
<dbReference type="GO" id="GO:0051082">
    <property type="term" value="F:unfolded protein binding"/>
    <property type="evidence" value="ECO:0007669"/>
    <property type="project" value="UniProtKB-UniRule"/>
</dbReference>
<dbReference type="GO" id="GO:0008270">
    <property type="term" value="F:zinc ion binding"/>
    <property type="evidence" value="ECO:0007669"/>
    <property type="project" value="InterPro"/>
</dbReference>
<dbReference type="GO" id="GO:0051301">
    <property type="term" value="P:cell division"/>
    <property type="evidence" value="ECO:0007669"/>
    <property type="project" value="TreeGrafter"/>
</dbReference>
<dbReference type="GO" id="GO:0051603">
    <property type="term" value="P:proteolysis involved in protein catabolic process"/>
    <property type="evidence" value="ECO:0007669"/>
    <property type="project" value="TreeGrafter"/>
</dbReference>
<dbReference type="CDD" id="cd19497">
    <property type="entry name" value="RecA-like_ClpX"/>
    <property type="match status" value="1"/>
</dbReference>
<dbReference type="FunFam" id="1.10.8.60:FF:000002">
    <property type="entry name" value="ATP-dependent Clp protease ATP-binding subunit ClpX"/>
    <property type="match status" value="1"/>
</dbReference>
<dbReference type="FunFam" id="3.40.50.300:FF:000005">
    <property type="entry name" value="ATP-dependent Clp protease ATP-binding subunit ClpX"/>
    <property type="match status" value="1"/>
</dbReference>
<dbReference type="Gene3D" id="1.10.8.60">
    <property type="match status" value="1"/>
</dbReference>
<dbReference type="Gene3D" id="6.20.220.10">
    <property type="entry name" value="ClpX chaperone, C4-type zinc finger domain"/>
    <property type="match status" value="1"/>
</dbReference>
<dbReference type="Gene3D" id="3.40.50.300">
    <property type="entry name" value="P-loop containing nucleotide triphosphate hydrolases"/>
    <property type="match status" value="1"/>
</dbReference>
<dbReference type="HAMAP" id="MF_00175">
    <property type="entry name" value="ClpX"/>
    <property type="match status" value="1"/>
</dbReference>
<dbReference type="InterPro" id="IPR003593">
    <property type="entry name" value="AAA+_ATPase"/>
</dbReference>
<dbReference type="InterPro" id="IPR050052">
    <property type="entry name" value="ATP-dep_Clp_protease_ClpX"/>
</dbReference>
<dbReference type="InterPro" id="IPR003959">
    <property type="entry name" value="ATPase_AAA_core"/>
</dbReference>
<dbReference type="InterPro" id="IPR019489">
    <property type="entry name" value="Clp_ATPase_C"/>
</dbReference>
<dbReference type="InterPro" id="IPR004487">
    <property type="entry name" value="Clp_protease_ATP-bd_su_ClpX"/>
</dbReference>
<dbReference type="InterPro" id="IPR046425">
    <property type="entry name" value="ClpX_bact"/>
</dbReference>
<dbReference type="InterPro" id="IPR027417">
    <property type="entry name" value="P-loop_NTPase"/>
</dbReference>
<dbReference type="InterPro" id="IPR010603">
    <property type="entry name" value="Znf_CppX_C4"/>
</dbReference>
<dbReference type="InterPro" id="IPR038366">
    <property type="entry name" value="Znf_CppX_C4_sf"/>
</dbReference>
<dbReference type="NCBIfam" id="TIGR00382">
    <property type="entry name" value="clpX"/>
    <property type="match status" value="1"/>
</dbReference>
<dbReference type="NCBIfam" id="NF003745">
    <property type="entry name" value="PRK05342.1"/>
    <property type="match status" value="1"/>
</dbReference>
<dbReference type="PANTHER" id="PTHR48102:SF7">
    <property type="entry name" value="ATP-DEPENDENT CLP PROTEASE ATP-BINDING SUBUNIT CLPX-LIKE, MITOCHONDRIAL"/>
    <property type="match status" value="1"/>
</dbReference>
<dbReference type="PANTHER" id="PTHR48102">
    <property type="entry name" value="ATP-DEPENDENT CLP PROTEASE ATP-BINDING SUBUNIT CLPX-LIKE, MITOCHONDRIAL-RELATED"/>
    <property type="match status" value="1"/>
</dbReference>
<dbReference type="Pfam" id="PF07724">
    <property type="entry name" value="AAA_2"/>
    <property type="match status" value="1"/>
</dbReference>
<dbReference type="Pfam" id="PF10431">
    <property type="entry name" value="ClpB_D2-small"/>
    <property type="match status" value="1"/>
</dbReference>
<dbReference type="Pfam" id="PF06689">
    <property type="entry name" value="zf-C4_ClpX"/>
    <property type="match status" value="1"/>
</dbReference>
<dbReference type="SMART" id="SM00382">
    <property type="entry name" value="AAA"/>
    <property type="match status" value="1"/>
</dbReference>
<dbReference type="SMART" id="SM01086">
    <property type="entry name" value="ClpB_D2-small"/>
    <property type="match status" value="1"/>
</dbReference>
<dbReference type="SMART" id="SM00994">
    <property type="entry name" value="zf-C4_ClpX"/>
    <property type="match status" value="1"/>
</dbReference>
<dbReference type="SUPFAM" id="SSF57716">
    <property type="entry name" value="Glucocorticoid receptor-like (DNA-binding domain)"/>
    <property type="match status" value="1"/>
</dbReference>
<dbReference type="SUPFAM" id="SSF52540">
    <property type="entry name" value="P-loop containing nucleoside triphosphate hydrolases"/>
    <property type="match status" value="1"/>
</dbReference>
<dbReference type="PROSITE" id="PS51902">
    <property type="entry name" value="CLPX_ZB"/>
    <property type="match status" value="1"/>
</dbReference>
<feature type="chain" id="PRO_1000024625" description="ATP-dependent Clp protease ATP-binding subunit ClpX">
    <location>
        <begin position="1"/>
        <end position="427"/>
    </location>
</feature>
<feature type="domain" description="ClpX-type ZB" evidence="2">
    <location>
        <begin position="4"/>
        <end position="57"/>
    </location>
</feature>
<feature type="binding site" evidence="2">
    <location>
        <position position="16"/>
    </location>
    <ligand>
        <name>Zn(2+)</name>
        <dbReference type="ChEBI" id="CHEBI:29105"/>
    </ligand>
</feature>
<feature type="binding site" evidence="2">
    <location>
        <position position="19"/>
    </location>
    <ligand>
        <name>Zn(2+)</name>
        <dbReference type="ChEBI" id="CHEBI:29105"/>
    </ligand>
</feature>
<feature type="binding site" evidence="2">
    <location>
        <position position="38"/>
    </location>
    <ligand>
        <name>Zn(2+)</name>
        <dbReference type="ChEBI" id="CHEBI:29105"/>
    </ligand>
</feature>
<feature type="binding site" evidence="2">
    <location>
        <position position="41"/>
    </location>
    <ligand>
        <name>Zn(2+)</name>
        <dbReference type="ChEBI" id="CHEBI:29105"/>
    </ligand>
</feature>
<feature type="binding site" evidence="1">
    <location>
        <begin position="122"/>
        <end position="129"/>
    </location>
    <ligand>
        <name>ATP</name>
        <dbReference type="ChEBI" id="CHEBI:30616"/>
    </ligand>
</feature>
<keyword id="KW-0067">ATP-binding</keyword>
<keyword id="KW-0143">Chaperone</keyword>
<keyword id="KW-0479">Metal-binding</keyword>
<keyword id="KW-0547">Nucleotide-binding</keyword>
<keyword id="KW-0862">Zinc</keyword>
<gene>
    <name evidence="1" type="primary">clpX</name>
    <name type="ordered locus">Pfl01_3696</name>
</gene>
<proteinExistence type="inferred from homology"/>
<protein>
    <recommendedName>
        <fullName evidence="1">ATP-dependent Clp protease ATP-binding subunit ClpX</fullName>
    </recommendedName>
</protein>
<reference key="1">
    <citation type="journal article" date="2009" name="Genome Biol.">
        <title>Genomic and genetic analyses of diversity and plant interactions of Pseudomonas fluorescens.</title>
        <authorList>
            <person name="Silby M.W."/>
            <person name="Cerdeno-Tarraga A.M."/>
            <person name="Vernikos G.S."/>
            <person name="Giddens S.R."/>
            <person name="Jackson R.W."/>
            <person name="Preston G.M."/>
            <person name="Zhang X.-X."/>
            <person name="Moon C.D."/>
            <person name="Gehrig S.M."/>
            <person name="Godfrey S.A.C."/>
            <person name="Knight C.G."/>
            <person name="Malone J.G."/>
            <person name="Robinson Z."/>
            <person name="Spiers A.J."/>
            <person name="Harris S."/>
            <person name="Challis G.L."/>
            <person name="Yaxley A.M."/>
            <person name="Harris D."/>
            <person name="Seeger K."/>
            <person name="Murphy L."/>
            <person name="Rutter S."/>
            <person name="Squares R."/>
            <person name="Quail M.A."/>
            <person name="Saunders E."/>
            <person name="Mavromatis K."/>
            <person name="Brettin T.S."/>
            <person name="Bentley S.D."/>
            <person name="Hothersall J."/>
            <person name="Stephens E."/>
            <person name="Thomas C.M."/>
            <person name="Parkhill J."/>
            <person name="Levy S.B."/>
            <person name="Rainey P.B."/>
            <person name="Thomson N.R."/>
        </authorList>
    </citation>
    <scope>NUCLEOTIDE SEQUENCE [LARGE SCALE GENOMIC DNA]</scope>
    <source>
        <strain>Pf0-1</strain>
    </source>
</reference>